<name>DRS5_PHYSA</name>
<organism>
    <name type="scientific">Phyllomedusa sauvagei</name>
    <name type="common">Sauvage's leaf frog</name>
    <dbReference type="NCBI Taxonomy" id="8395"/>
    <lineage>
        <taxon>Eukaryota</taxon>
        <taxon>Metazoa</taxon>
        <taxon>Chordata</taxon>
        <taxon>Craniata</taxon>
        <taxon>Vertebrata</taxon>
        <taxon>Euteleostomi</taxon>
        <taxon>Amphibia</taxon>
        <taxon>Batrachia</taxon>
        <taxon>Anura</taxon>
        <taxon>Neobatrachia</taxon>
        <taxon>Hyloidea</taxon>
        <taxon>Hylidae</taxon>
        <taxon>Phyllomedusinae</taxon>
        <taxon>Phyllomedusa</taxon>
    </lineage>
</organism>
<reference key="1">
    <citation type="journal article" date="1994" name="Eur. J. Biochem.">
        <title>Isolation and structure of novel defensive peptides from frog skin.</title>
        <authorList>
            <person name="Mor A."/>
            <person name="Nicolas P."/>
        </authorList>
    </citation>
    <scope>PROTEIN SEQUENCE</scope>
    <scope>SUBCELLULAR LOCATION</scope>
    <source>
        <tissue>Skin secretion</tissue>
    </source>
</reference>
<reference key="2">
    <citation type="journal article" date="2008" name="Peptides">
        <title>A consistent nomenclature of antimicrobial peptides isolated from frogs of the subfamily Phyllomedusinae.</title>
        <authorList>
            <person name="Amiche M."/>
            <person name="Ladram A."/>
            <person name="Nicolas P."/>
        </authorList>
    </citation>
    <scope>NOMENCLATURE</scope>
</reference>
<comment type="function">
    <text evidence="1 2 5">Potent antimicrobial peptide with activity against bacteria and protozoa (By similarity). Also has activity against fungi (PubMed:8306981). Probably acts by disturbing membrane functions with its amphipathic structure (Probable).</text>
</comment>
<comment type="subcellular location">
    <subcellularLocation>
        <location evidence="2">Secreted</location>
    </subcellularLocation>
</comment>
<comment type="tissue specificity">
    <text evidence="6">Expressed by the skin glands.</text>
</comment>
<comment type="similarity">
    <text evidence="5">Belongs to the frog skin active peptide (FSAP) family. Dermaseptin subfamily.</text>
</comment>
<comment type="online information" name="The antimicrobial peptide database">
    <link uri="https://wangapd3.com/database/query_output.php?ID=0161"/>
</comment>
<sequence length="29" mass="2840">GLWSKIKTAGKSVAKAAAKAAVKAVTNAV</sequence>
<protein>
    <recommendedName>
        <fullName evidence="3">Dermaseptin-S5</fullName>
        <shortName evidence="3">DRS-S5</shortName>
    </recommendedName>
    <alternativeName>
        <fullName evidence="4">Dermaseptin V</fullName>
        <shortName evidence="4">DS V</shortName>
    </alternativeName>
    <alternativeName>
        <fullName>Dermaseptin-5</fullName>
        <shortName>DS5</shortName>
    </alternativeName>
</protein>
<accession>P80281</accession>
<feature type="peptide" id="PRO_0000043643" description="Dermaseptin-S5" evidence="2">
    <location>
        <begin position="1"/>
        <end position="29"/>
    </location>
</feature>
<dbReference type="SMR" id="P80281"/>
<dbReference type="GO" id="GO:0005576">
    <property type="term" value="C:extracellular region"/>
    <property type="evidence" value="ECO:0007669"/>
    <property type="project" value="UniProtKB-SubCell"/>
</dbReference>
<dbReference type="GO" id="GO:0042742">
    <property type="term" value="P:defense response to bacterium"/>
    <property type="evidence" value="ECO:0007669"/>
    <property type="project" value="UniProtKB-KW"/>
</dbReference>
<dbReference type="GO" id="GO:0050832">
    <property type="term" value="P:defense response to fungus"/>
    <property type="evidence" value="ECO:0007669"/>
    <property type="project" value="UniProtKB-KW"/>
</dbReference>
<dbReference type="GO" id="GO:0031640">
    <property type="term" value="P:killing of cells of another organism"/>
    <property type="evidence" value="ECO:0007669"/>
    <property type="project" value="UniProtKB-KW"/>
</dbReference>
<proteinExistence type="evidence at protein level"/>
<keyword id="KW-0878">Amphibian defense peptide</keyword>
<keyword id="KW-0044">Antibiotic</keyword>
<keyword id="KW-0929">Antimicrobial</keyword>
<keyword id="KW-0903">Direct protein sequencing</keyword>
<keyword id="KW-0295">Fungicide</keyword>
<keyword id="KW-0964">Secreted</keyword>
<evidence type="ECO:0000250" key="1">
    <source>
        <dbReference type="UniProtKB" id="P24302"/>
    </source>
</evidence>
<evidence type="ECO:0000269" key="2">
    <source>
    </source>
</evidence>
<evidence type="ECO:0000303" key="3">
    <source>
    </source>
</evidence>
<evidence type="ECO:0000303" key="4">
    <source>
    </source>
</evidence>
<evidence type="ECO:0000305" key="5"/>
<evidence type="ECO:0000305" key="6">
    <source>
    </source>
</evidence>